<protein>
    <recommendedName>
        <fullName evidence="2">Calmodulin-2</fullName>
    </recommendedName>
</protein>
<sequence>MADQLTEEQIAEFKEAFSLFDKDGDGTITTKELGTVMRSLGQNPTEAELQDMINEVDADGNGTIDFPEFLTMMARKMKDTDSEEEIREAFRVFDKDGNGYISAAELRHVMTNLGEKLTDEEVDEMIREADIDGDGQVNYEEFVQMMTAK</sequence>
<keyword id="KW-0007">Acetylation</keyword>
<keyword id="KW-0106">Calcium</keyword>
<keyword id="KW-0963">Cytoplasm</keyword>
<keyword id="KW-0206">Cytoskeleton</keyword>
<keyword id="KW-0903">Direct protein sequencing</keyword>
<keyword id="KW-1017">Isopeptide bond</keyword>
<keyword id="KW-0479">Metal-binding</keyword>
<keyword id="KW-0488">Methylation</keyword>
<keyword id="KW-0597">Phosphoprotein</keyword>
<keyword id="KW-1185">Reference proteome</keyword>
<keyword id="KW-0677">Repeat</keyword>
<keyword id="KW-0832">Ubl conjugation</keyword>
<gene>
    <name evidence="13" type="primary">Calm2</name>
    <name type="synonym">Cam2</name>
    <name type="synonym">CamC</name>
</gene>
<proteinExistence type="evidence at protein level"/>
<comment type="function">
    <text evidence="2">Calmodulin acts as part of a calcium signal transduction pathway by mediating the control of a large number of enzymes, ion channels, aquaporins and other proteins through calcium-binding. Calcium-binding is required for the activation of calmodulin. Among the enzymes to be stimulated by the calmodulin-calcium complex are a number of protein kinases, such as myosin light-chain kinases and calmodulin-dependent protein kinase type II (CaMK2), and phosphatases. Together with CCP110 and centrin, is involved in a genetic pathway that regulates the centrosome cycle and progression through cytokinesis. Mediates calcium-dependent inactivation of CACNA1C. Positively regulates calcium-activated potassium channel activity of KCNN2.</text>
</comment>
<comment type="subunit">
    <text evidence="2 3 6 8 9 10">Interacts with CEP97, CCP110, MYO1C, TTN/titin and SRY. Interacts with MYO10. Interacts with RRAD (By similarity). Interacts with USP6; the interaction is calcium dependent (By similarity). Interacts with CDK5RAP2. Interacts with SCN5A (By similarity). Interacts with FCHO1. Interacts with MIP in a 1:2 stoichiometry; the interaction with the cytoplasmic domains from two MIP subunits promotes MIP water channel closure. Interacts with ORAI1; this may play a role in the regulation of ORAI1-mediated calcium transport (By similarity). Interacts with RYR1 (PubMed:18650434). Interacts with MYO5A (By similarity). Interacts with IQCF1 (PubMed:25380116). Interacts with SYT7 (PubMed:24569478). Interacts with CEACAM1 (via cytoplasmic domain); this interaction is in a calcium dependent manner and reduces homophilic cell adhesion through dissociation of dimer (By similarity). Interacts with RYR2; regulates RYR2 calcium-release channel activity (PubMed:18650434). Interacts with PCP4; regulates calmodulin calcium-binding (By similarity). Interacts with the heterotetrameric KCNQ2 and KCNQ3 channel; the interaction is calcium-independent, constitutive and participates in the proper assembly of a functional heterotetrameric M channel (By similarity). Component of the SIFI complex (By similarity).</text>
</comment>
<comment type="subcellular location">
    <subcellularLocation>
        <location>Cytoplasm</location>
        <location>Cytoskeleton</location>
        <location>Spindle</location>
    </subcellularLocation>
    <subcellularLocation>
        <location>Cytoplasm</location>
        <location>Cytoskeleton</location>
        <location>Spindle pole</location>
    </subcellularLocation>
    <text evidence="1">Distributed throughout the cell during interphase, but during mitosis becomes dramatically localized to the spindle poles and the spindle microtubules.</text>
</comment>
<comment type="PTM">
    <text evidence="1">Ubiquitination results in a strongly decreased activity.</text>
</comment>
<comment type="PTM">
    <text evidence="1">Phosphorylation results in a decreased activity.</text>
</comment>
<comment type="miscellaneous">
    <text evidence="2">This protein has four functional calcium-binding sites.</text>
</comment>
<comment type="similarity">
    <text evidence="12">Belongs to the calmodulin family.</text>
</comment>
<evidence type="ECO:0000250" key="1"/>
<evidence type="ECO:0000250" key="2">
    <source>
        <dbReference type="UniProtKB" id="P0DP24"/>
    </source>
</evidence>
<evidence type="ECO:0000250" key="3">
    <source>
        <dbReference type="UniProtKB" id="P0DP26"/>
    </source>
</evidence>
<evidence type="ECO:0000250" key="4">
    <source>
        <dbReference type="UniProtKB" id="P0DP30"/>
    </source>
</evidence>
<evidence type="ECO:0000250" key="5">
    <source>
        <dbReference type="UniProtKB" id="P62157"/>
    </source>
</evidence>
<evidence type="ECO:0000250" key="6">
    <source>
        <dbReference type="UniProtKB" id="P62161"/>
    </source>
</evidence>
<evidence type="ECO:0000255" key="7">
    <source>
        <dbReference type="PROSITE-ProRule" id="PRU00448"/>
    </source>
</evidence>
<evidence type="ECO:0000269" key="8">
    <source>
    </source>
</evidence>
<evidence type="ECO:0000269" key="9">
    <source>
    </source>
</evidence>
<evidence type="ECO:0000269" key="10">
    <source>
    </source>
</evidence>
<evidence type="ECO:0000269" key="11">
    <source ref="6"/>
</evidence>
<evidence type="ECO:0000305" key="12"/>
<evidence type="ECO:0000312" key="13">
    <source>
        <dbReference type="MGI" id="MGI:103250"/>
    </source>
</evidence>
<evidence type="ECO:0007744" key="14">
    <source>
    </source>
</evidence>
<evidence type="ECO:0007744" key="15">
    <source>
    </source>
</evidence>
<evidence type="ECO:0007744" key="16">
    <source>
    </source>
</evidence>
<accession>P0DP27</accession>
<accession>P02593</accession>
<accession>P62204</accession>
<accession>P70667</accession>
<accession>P99014</accession>
<accession>Q3TEH7</accession>
<accession>Q3THK5</accession>
<accession>Q3U6Z5</accession>
<accession>Q3U7C7</accession>
<accession>Q498A3</accession>
<accession>Q61379</accession>
<accession>Q61380</accession>
<accession>Q8BNC9</accession>
<accession>Q91VQ9</accession>
<accession>Q9D6G4</accession>
<dbReference type="EMBL" id="M27844">
    <property type="protein sequence ID" value="AAA37365.1"/>
    <property type="molecule type" value="Genomic_DNA"/>
</dbReference>
<dbReference type="EMBL" id="AY902353">
    <property type="protein sequence ID" value="AAY21063.1"/>
    <property type="molecule type" value="Genomic_DNA"/>
</dbReference>
<dbReference type="EMBL" id="AK012247">
    <property type="protein sequence ID" value="BAB28116.1"/>
    <property type="molecule type" value="mRNA"/>
</dbReference>
<dbReference type="EMBL" id="AK012564">
    <property type="protein sequence ID" value="BAB28319.1"/>
    <property type="molecule type" value="mRNA"/>
</dbReference>
<dbReference type="EMBL" id="AK013068">
    <property type="protein sequence ID" value="BAB28631.1"/>
    <property type="molecule type" value="mRNA"/>
</dbReference>
<dbReference type="EMBL" id="AK152303">
    <property type="protein sequence ID" value="BAE31109.1"/>
    <property type="molecule type" value="mRNA"/>
</dbReference>
<dbReference type="EMBL" id="AK160636">
    <property type="protein sequence ID" value="BAE35930.1"/>
    <property type="molecule type" value="mRNA"/>
</dbReference>
<dbReference type="EMBL" id="AK161268">
    <property type="protein sequence ID" value="BAE36280.1"/>
    <property type="molecule type" value="mRNA"/>
</dbReference>
<dbReference type="EMBL" id="AK161984">
    <property type="protein sequence ID" value="BAE36667.1"/>
    <property type="molecule type" value="mRNA"/>
</dbReference>
<dbReference type="EMBL" id="AK168741">
    <property type="protein sequence ID" value="BAE40582.1"/>
    <property type="molecule type" value="mRNA"/>
</dbReference>
<dbReference type="EMBL" id="BC010730">
    <property type="protein sequence ID" value="AAH10730.1"/>
    <property type="molecule type" value="mRNA"/>
</dbReference>
<dbReference type="EMBL" id="BC021347">
    <property type="protein sequence ID" value="AAH21347.1"/>
    <property type="molecule type" value="mRNA"/>
</dbReference>
<dbReference type="EMBL" id="BC051444">
    <property type="protein sequence ID" value="AAH51444.1"/>
    <property type="molecule type" value="mRNA"/>
</dbReference>
<dbReference type="EMBL" id="BC100301">
    <property type="protein sequence ID" value="AAI00302.1"/>
    <property type="molecule type" value="mRNA"/>
</dbReference>
<dbReference type="EMBL" id="L31642">
    <property type="protein sequence ID" value="AAA65934.1"/>
    <property type="molecule type" value="mRNA"/>
</dbReference>
<dbReference type="CCDS" id="CCDS37716.1"/>
<dbReference type="RefSeq" id="NP_031615.1">
    <property type="nucleotide sequence ID" value="NM_007589.5"/>
</dbReference>
<dbReference type="RefSeq" id="NP_031616.1">
    <property type="nucleotide sequence ID" value="NM_007590.3"/>
</dbReference>
<dbReference type="SMR" id="P0DP27"/>
<dbReference type="FunCoup" id="P0DP27">
    <property type="interactions" value="4167"/>
</dbReference>
<dbReference type="iPTMnet" id="P0DP27"/>
<dbReference type="jPOST" id="P0DP27"/>
<dbReference type="Pumba" id="P0DP27"/>
<dbReference type="Antibodypedia" id="39411">
    <property type="antibodies" value="192 antibodies from 17 providers"/>
</dbReference>
<dbReference type="Antibodypedia" id="4344">
    <property type="antibodies" value="514 antibodies from 34 providers"/>
</dbReference>
<dbReference type="Antibodypedia" id="53945">
    <property type="antibodies" value="71 antibodies from 14 providers"/>
</dbReference>
<dbReference type="DNASU" id="12313"/>
<dbReference type="Ensembl" id="ENSMUST00000019514.10">
    <property type="protein sequence ID" value="ENSMUSP00000019514.10"/>
    <property type="gene ID" value="ENSMUSG00000019370.11"/>
</dbReference>
<dbReference type="Ensembl" id="ENSMUST00000040440.7">
    <property type="protein sequence ID" value="ENSMUSP00000048857.7"/>
    <property type="gene ID" value="ENSMUSG00000036438.15"/>
</dbReference>
<dbReference type="Ensembl" id="ENSMUST00000110082.11">
    <property type="protein sequence ID" value="ENSMUSP00000105709.4"/>
    <property type="gene ID" value="ENSMUSG00000001175.17"/>
</dbReference>
<dbReference type="GeneID" id="12314"/>
<dbReference type="GeneID" id="12315"/>
<dbReference type="KEGG" id="mmu:12313"/>
<dbReference type="KEGG" id="mmu:12314"/>
<dbReference type="KEGG" id="mmu:12315"/>
<dbReference type="AGR" id="MGI:103250"/>
<dbReference type="CTD" id="801"/>
<dbReference type="CTD" id="805"/>
<dbReference type="CTD" id="808"/>
<dbReference type="MGI" id="MGI:103250">
    <property type="gene designation" value="Calm2"/>
</dbReference>
<dbReference type="VEuPathDB" id="HostDB:ENSMUSG00000001175"/>
<dbReference type="VEuPathDB" id="HostDB:ENSMUSG00000019370"/>
<dbReference type="VEuPathDB" id="HostDB:ENSMUSG00000036438"/>
<dbReference type="InParanoid" id="P0DP27"/>
<dbReference type="OMA" id="ARKMKEC"/>
<dbReference type="OrthoDB" id="9559602at2759"/>
<dbReference type="BioGRID-ORCS" id="12313">
    <property type="hits" value="7 hits in 81 CRISPR screens"/>
</dbReference>
<dbReference type="BioGRID-ORCS" id="12314">
    <property type="hits" value="4 hits in 74 CRISPR screens"/>
</dbReference>
<dbReference type="BioGRID-ORCS" id="12315">
    <property type="hits" value="1 hit in 77 CRISPR screens"/>
</dbReference>
<dbReference type="ChiTaRS" id="Calm2">
    <property type="organism name" value="mouse"/>
</dbReference>
<dbReference type="PRO" id="PR:P0DP27"/>
<dbReference type="Proteomes" id="UP000000589">
    <property type="component" value="Chromosome 12"/>
</dbReference>
<dbReference type="Proteomes" id="UP000000589">
    <property type="component" value="Chromosome 17"/>
</dbReference>
<dbReference type="Proteomes" id="UP000000589">
    <property type="component" value="Chromosome 7"/>
</dbReference>
<dbReference type="RNAct" id="P0DP27">
    <property type="molecule type" value="protein"/>
</dbReference>
<dbReference type="Bgee" id="ENSMUSG00000001175">
    <property type="expression patterns" value="Expressed in ureter smooth muscle and 283 other cell types or tissues"/>
</dbReference>
<dbReference type="ExpressionAtlas" id="P0DP27">
    <property type="expression patterns" value="baseline and differential"/>
</dbReference>
<dbReference type="GO" id="GO:0034704">
    <property type="term" value="C:calcium channel complex"/>
    <property type="evidence" value="ECO:0007669"/>
    <property type="project" value="Ensembl"/>
</dbReference>
<dbReference type="GO" id="GO:0044305">
    <property type="term" value="C:calyx of Held"/>
    <property type="evidence" value="ECO:0000314"/>
    <property type="project" value="SynGO"/>
</dbReference>
<dbReference type="GO" id="GO:1902494">
    <property type="term" value="C:catalytic complex"/>
    <property type="evidence" value="ECO:0007669"/>
    <property type="project" value="Ensembl"/>
</dbReference>
<dbReference type="GO" id="GO:0005813">
    <property type="term" value="C:centrosome"/>
    <property type="evidence" value="ECO:0007669"/>
    <property type="project" value="Ensembl"/>
</dbReference>
<dbReference type="GO" id="GO:0005737">
    <property type="term" value="C:cytoplasm"/>
    <property type="evidence" value="ECO:0000250"/>
    <property type="project" value="UniProtKB"/>
</dbReference>
<dbReference type="GO" id="GO:0030426">
    <property type="term" value="C:growth cone"/>
    <property type="evidence" value="ECO:0007669"/>
    <property type="project" value="Ensembl"/>
</dbReference>
<dbReference type="GO" id="GO:0016020">
    <property type="term" value="C:membrane"/>
    <property type="evidence" value="ECO:0000314"/>
    <property type="project" value="ARUK-UCL"/>
</dbReference>
<dbReference type="GO" id="GO:0031966">
    <property type="term" value="C:mitochondrial membrane"/>
    <property type="evidence" value="ECO:0007669"/>
    <property type="project" value="Ensembl"/>
</dbReference>
<dbReference type="GO" id="GO:0043209">
    <property type="term" value="C:myelin sheath"/>
    <property type="evidence" value="ECO:0000314"/>
    <property type="project" value="CAFA"/>
</dbReference>
<dbReference type="GO" id="GO:0099524">
    <property type="term" value="C:postsynaptic cytosol"/>
    <property type="evidence" value="ECO:0007669"/>
    <property type="project" value="Ensembl"/>
</dbReference>
<dbReference type="GO" id="GO:0099523">
    <property type="term" value="C:presynaptic cytosol"/>
    <property type="evidence" value="ECO:0000314"/>
    <property type="project" value="SynGO"/>
</dbReference>
<dbReference type="GO" id="GO:0030017">
    <property type="term" value="C:sarcomere"/>
    <property type="evidence" value="ECO:0007669"/>
    <property type="project" value="Ensembl"/>
</dbReference>
<dbReference type="GO" id="GO:0098685">
    <property type="term" value="C:Schaffer collateral - CA1 synapse"/>
    <property type="evidence" value="ECO:0007669"/>
    <property type="project" value="Ensembl"/>
</dbReference>
<dbReference type="GO" id="GO:0005876">
    <property type="term" value="C:spindle microtubule"/>
    <property type="evidence" value="ECO:0007669"/>
    <property type="project" value="Ensembl"/>
</dbReference>
<dbReference type="GO" id="GO:0000922">
    <property type="term" value="C:spindle pole"/>
    <property type="evidence" value="ECO:0007669"/>
    <property type="project" value="UniProtKB-SubCell"/>
</dbReference>
<dbReference type="GO" id="GO:0030672">
    <property type="term" value="C:synaptic vesicle membrane"/>
    <property type="evidence" value="ECO:0007669"/>
    <property type="project" value="Ensembl"/>
</dbReference>
<dbReference type="GO" id="GO:0031982">
    <property type="term" value="C:vesicle"/>
    <property type="evidence" value="ECO:0000314"/>
    <property type="project" value="ARUK-UCL"/>
</dbReference>
<dbReference type="GO" id="GO:0008076">
    <property type="term" value="C:voltage-gated potassium channel complex"/>
    <property type="evidence" value="ECO:0000316"/>
    <property type="project" value="MGI"/>
</dbReference>
<dbReference type="GO" id="GO:0010856">
    <property type="term" value="F:adenylate cyclase activator activity"/>
    <property type="evidence" value="ECO:0007669"/>
    <property type="project" value="Ensembl"/>
</dbReference>
<dbReference type="GO" id="GO:0008179">
    <property type="term" value="F:adenylate cyclase binding"/>
    <property type="evidence" value="ECO:0007669"/>
    <property type="project" value="Ensembl"/>
</dbReference>
<dbReference type="GO" id="GO:0019855">
    <property type="term" value="F:calcium channel inhibitor activity"/>
    <property type="evidence" value="ECO:0000250"/>
    <property type="project" value="UniProtKB"/>
</dbReference>
<dbReference type="GO" id="GO:0005509">
    <property type="term" value="F:calcium ion binding"/>
    <property type="evidence" value="ECO:0000250"/>
    <property type="project" value="UniProtKB"/>
</dbReference>
<dbReference type="GO" id="GO:0048306">
    <property type="term" value="F:calcium-dependent protein binding"/>
    <property type="evidence" value="ECO:0000353"/>
    <property type="project" value="ARUK-UCL"/>
</dbReference>
<dbReference type="GO" id="GO:0050998">
    <property type="term" value="F:nitric-oxide synthase binding"/>
    <property type="evidence" value="ECO:0007669"/>
    <property type="project" value="Ensembl"/>
</dbReference>
<dbReference type="GO" id="GO:0030235">
    <property type="term" value="F:nitric-oxide synthase regulator activity"/>
    <property type="evidence" value="ECO:0007669"/>
    <property type="project" value="Ensembl"/>
</dbReference>
<dbReference type="GO" id="GO:0043548">
    <property type="term" value="F:phosphatidylinositol 3-kinase binding"/>
    <property type="evidence" value="ECO:0007669"/>
    <property type="project" value="Ensembl"/>
</dbReference>
<dbReference type="GO" id="GO:0019904">
    <property type="term" value="F:protein domain specific binding"/>
    <property type="evidence" value="ECO:0007669"/>
    <property type="project" value="Ensembl"/>
</dbReference>
<dbReference type="GO" id="GO:0019901">
    <property type="term" value="F:protein kinase binding"/>
    <property type="evidence" value="ECO:0007669"/>
    <property type="project" value="Ensembl"/>
</dbReference>
<dbReference type="GO" id="GO:0072542">
    <property type="term" value="F:protein phosphatase activator activity"/>
    <property type="evidence" value="ECO:0007669"/>
    <property type="project" value="Ensembl"/>
</dbReference>
<dbReference type="GO" id="GO:0043539">
    <property type="term" value="F:protein serine/threonine kinase activator activity"/>
    <property type="evidence" value="ECO:0007669"/>
    <property type="project" value="Ensembl"/>
</dbReference>
<dbReference type="GO" id="GO:0031432">
    <property type="term" value="F:titin binding"/>
    <property type="evidence" value="ECO:0007669"/>
    <property type="project" value="Ensembl"/>
</dbReference>
<dbReference type="GO" id="GO:0044325">
    <property type="term" value="F:transmembrane transporter binding"/>
    <property type="evidence" value="ECO:0007669"/>
    <property type="project" value="Ensembl"/>
</dbReference>
<dbReference type="GO" id="GO:0141110">
    <property type="term" value="F:transporter inhibitor activity"/>
    <property type="evidence" value="ECO:0000314"/>
    <property type="project" value="ARUK-UCL"/>
</dbReference>
<dbReference type="GO" id="GO:0031800">
    <property type="term" value="F:type 3 metabotropic glutamate receptor binding"/>
    <property type="evidence" value="ECO:0007669"/>
    <property type="project" value="Ensembl"/>
</dbReference>
<dbReference type="GO" id="GO:0016240">
    <property type="term" value="P:autophagosome membrane docking"/>
    <property type="evidence" value="ECO:0007669"/>
    <property type="project" value="Ensembl"/>
</dbReference>
<dbReference type="GO" id="GO:0097720">
    <property type="term" value="P:calcineurin-mediated signaling"/>
    <property type="evidence" value="ECO:0007669"/>
    <property type="project" value="Ensembl"/>
</dbReference>
<dbReference type="GO" id="GO:0035458">
    <property type="term" value="P:cellular response to interferon-beta"/>
    <property type="evidence" value="ECO:0007669"/>
    <property type="project" value="Ensembl"/>
</dbReference>
<dbReference type="GO" id="GO:0071346">
    <property type="term" value="P:cellular response to type II interferon"/>
    <property type="evidence" value="ECO:0007669"/>
    <property type="project" value="Ensembl"/>
</dbReference>
<dbReference type="GO" id="GO:0005513">
    <property type="term" value="P:detection of calcium ion"/>
    <property type="evidence" value="ECO:0007669"/>
    <property type="project" value="Ensembl"/>
</dbReference>
<dbReference type="GO" id="GO:0090151">
    <property type="term" value="P:establishment of protein localization to mitochondrial membrane"/>
    <property type="evidence" value="ECO:0007669"/>
    <property type="project" value="Ensembl"/>
</dbReference>
<dbReference type="GO" id="GO:0000086">
    <property type="term" value="P:G2/M transition of mitotic cell cycle"/>
    <property type="evidence" value="ECO:0000314"/>
    <property type="project" value="MGI"/>
</dbReference>
<dbReference type="GO" id="GO:1990456">
    <property type="term" value="P:mitochondrion-endoplasmic reticulum membrane tethering"/>
    <property type="evidence" value="ECO:0007669"/>
    <property type="project" value="Ensembl"/>
</dbReference>
<dbReference type="GO" id="GO:1905913">
    <property type="term" value="P:negative regulation of calcium ion export across plasma membrane"/>
    <property type="evidence" value="ECO:0000314"/>
    <property type="project" value="ARUK-UCL"/>
</dbReference>
<dbReference type="GO" id="GO:0060315">
    <property type="term" value="P:negative regulation of ryanodine-sensitive calcium-release channel activity"/>
    <property type="evidence" value="ECO:0000250"/>
    <property type="project" value="UniProtKB"/>
</dbReference>
<dbReference type="GO" id="GO:0046427">
    <property type="term" value="P:positive regulation of receptor signaling pathway via JAK-STAT"/>
    <property type="evidence" value="ECO:0007669"/>
    <property type="project" value="Ensembl"/>
</dbReference>
<dbReference type="GO" id="GO:0140238">
    <property type="term" value="P:presynaptic endocytosis"/>
    <property type="evidence" value="ECO:0000314"/>
    <property type="project" value="SynGO"/>
</dbReference>
<dbReference type="GO" id="GO:0050848">
    <property type="term" value="P:regulation of calcium-mediated signaling"/>
    <property type="evidence" value="ECO:0000316"/>
    <property type="project" value="ARUK-UCL"/>
</dbReference>
<dbReference type="GO" id="GO:0098901">
    <property type="term" value="P:regulation of cardiac muscle cell action potential"/>
    <property type="evidence" value="ECO:0007669"/>
    <property type="project" value="Ensembl"/>
</dbReference>
<dbReference type="GO" id="GO:0055117">
    <property type="term" value="P:regulation of cardiac muscle contraction"/>
    <property type="evidence" value="ECO:0007669"/>
    <property type="project" value="Ensembl"/>
</dbReference>
<dbReference type="GO" id="GO:0032465">
    <property type="term" value="P:regulation of cytokinesis"/>
    <property type="evidence" value="ECO:0007669"/>
    <property type="project" value="Ensembl"/>
</dbReference>
<dbReference type="GO" id="GO:0002027">
    <property type="term" value="P:regulation of heart rate"/>
    <property type="evidence" value="ECO:0007669"/>
    <property type="project" value="Ensembl"/>
</dbReference>
<dbReference type="GO" id="GO:0010880">
    <property type="term" value="P:regulation of release of sequestered calcium ion into cytosol by sarcoplasmic reticulum"/>
    <property type="evidence" value="ECO:0007669"/>
    <property type="project" value="Ensembl"/>
</dbReference>
<dbReference type="GO" id="GO:1900242">
    <property type="term" value="P:regulation of synaptic vesicle endocytosis"/>
    <property type="evidence" value="ECO:0007669"/>
    <property type="project" value="Ensembl"/>
</dbReference>
<dbReference type="GO" id="GO:2000300">
    <property type="term" value="P:regulation of synaptic vesicle exocytosis"/>
    <property type="evidence" value="ECO:0007669"/>
    <property type="project" value="Ensembl"/>
</dbReference>
<dbReference type="GO" id="GO:0001975">
    <property type="term" value="P:response to amphetamine"/>
    <property type="evidence" value="ECO:0007669"/>
    <property type="project" value="Ensembl"/>
</dbReference>
<dbReference type="GO" id="GO:0051412">
    <property type="term" value="P:response to corticosterone"/>
    <property type="evidence" value="ECO:0007669"/>
    <property type="project" value="Ensembl"/>
</dbReference>
<dbReference type="CDD" id="cd00051">
    <property type="entry name" value="EFh"/>
    <property type="match status" value="2"/>
</dbReference>
<dbReference type="FunFam" id="1.10.238.10:FF:000527">
    <property type="entry name" value="Calmodulin-3"/>
    <property type="match status" value="1"/>
</dbReference>
<dbReference type="Gene3D" id="1.10.238.10">
    <property type="entry name" value="EF-hand"/>
    <property type="match status" value="3"/>
</dbReference>
<dbReference type="InterPro" id="IPR050230">
    <property type="entry name" value="CALM/Myosin/TropC-like"/>
</dbReference>
<dbReference type="InterPro" id="IPR011992">
    <property type="entry name" value="EF-hand-dom_pair"/>
</dbReference>
<dbReference type="InterPro" id="IPR018247">
    <property type="entry name" value="EF_Hand_1_Ca_BS"/>
</dbReference>
<dbReference type="InterPro" id="IPR002048">
    <property type="entry name" value="EF_hand_dom"/>
</dbReference>
<dbReference type="PANTHER" id="PTHR23048:SF0">
    <property type="entry name" value="CALMODULIN LIKE 3"/>
    <property type="match status" value="1"/>
</dbReference>
<dbReference type="PANTHER" id="PTHR23048">
    <property type="entry name" value="MYOSIN LIGHT CHAIN 1, 3"/>
    <property type="match status" value="1"/>
</dbReference>
<dbReference type="Pfam" id="PF13499">
    <property type="entry name" value="EF-hand_7"/>
    <property type="match status" value="2"/>
</dbReference>
<dbReference type="PRINTS" id="PR00450">
    <property type="entry name" value="RECOVERIN"/>
</dbReference>
<dbReference type="SMART" id="SM00054">
    <property type="entry name" value="EFh"/>
    <property type="match status" value="4"/>
</dbReference>
<dbReference type="SUPFAM" id="SSF47473">
    <property type="entry name" value="EF-hand"/>
    <property type="match status" value="1"/>
</dbReference>
<dbReference type="PROSITE" id="PS00018">
    <property type="entry name" value="EF_HAND_1"/>
    <property type="match status" value="4"/>
</dbReference>
<dbReference type="PROSITE" id="PS50222">
    <property type="entry name" value="EF_HAND_2"/>
    <property type="match status" value="4"/>
</dbReference>
<reference key="1">
    <citation type="journal article" date="1989" name="Gene">
        <title>Cloning and expression of mouse-brain calmodulin as an activator of Bordetella pertussis adenylate cyclase in Escherichia coli.</title>
        <authorList>
            <person name="Danchin A."/>
            <person name="Sezer O."/>
            <person name="Glaser P."/>
            <person name="Chalon P."/>
            <person name="Caput D."/>
        </authorList>
    </citation>
    <scope>NUCLEOTIDE SEQUENCE [GENOMIC DNA / MRNA]</scope>
</reference>
<reference key="2">
    <citation type="journal article" date="2006" name="BMC Genomics">
        <title>Genome-wide isolation of growth and obesity QTL using mouse speed congenic strains.</title>
        <authorList>
            <person name="Farber C.R."/>
            <person name="Corva P.M."/>
            <person name="Medrano J.F."/>
        </authorList>
    </citation>
    <scope>NUCLEOTIDE SEQUENCE [GENOMIC DNA]</scope>
    <source>
        <strain>CAST/EiJ</strain>
        <tissue>Brain</tissue>
    </source>
</reference>
<reference key="3">
    <citation type="journal article" date="2005" name="Science">
        <title>The transcriptional landscape of the mammalian genome.</title>
        <authorList>
            <person name="Carninci P."/>
            <person name="Kasukawa T."/>
            <person name="Katayama S."/>
            <person name="Gough J."/>
            <person name="Frith M.C."/>
            <person name="Maeda N."/>
            <person name="Oyama R."/>
            <person name="Ravasi T."/>
            <person name="Lenhard B."/>
            <person name="Wells C."/>
            <person name="Kodzius R."/>
            <person name="Shimokawa K."/>
            <person name="Bajic V.B."/>
            <person name="Brenner S.E."/>
            <person name="Batalov S."/>
            <person name="Forrest A.R."/>
            <person name="Zavolan M."/>
            <person name="Davis M.J."/>
            <person name="Wilming L.G."/>
            <person name="Aidinis V."/>
            <person name="Allen J.E."/>
            <person name="Ambesi-Impiombato A."/>
            <person name="Apweiler R."/>
            <person name="Aturaliya R.N."/>
            <person name="Bailey T.L."/>
            <person name="Bansal M."/>
            <person name="Baxter L."/>
            <person name="Beisel K.W."/>
            <person name="Bersano T."/>
            <person name="Bono H."/>
            <person name="Chalk A.M."/>
            <person name="Chiu K.P."/>
            <person name="Choudhary V."/>
            <person name="Christoffels A."/>
            <person name="Clutterbuck D.R."/>
            <person name="Crowe M.L."/>
            <person name="Dalla E."/>
            <person name="Dalrymple B.P."/>
            <person name="de Bono B."/>
            <person name="Della Gatta G."/>
            <person name="di Bernardo D."/>
            <person name="Down T."/>
            <person name="Engstrom P."/>
            <person name="Fagiolini M."/>
            <person name="Faulkner G."/>
            <person name="Fletcher C.F."/>
            <person name="Fukushima T."/>
            <person name="Furuno M."/>
            <person name="Futaki S."/>
            <person name="Gariboldi M."/>
            <person name="Georgii-Hemming P."/>
            <person name="Gingeras T.R."/>
            <person name="Gojobori T."/>
            <person name="Green R.E."/>
            <person name="Gustincich S."/>
            <person name="Harbers M."/>
            <person name="Hayashi Y."/>
            <person name="Hensch T.K."/>
            <person name="Hirokawa N."/>
            <person name="Hill D."/>
            <person name="Huminiecki L."/>
            <person name="Iacono M."/>
            <person name="Ikeo K."/>
            <person name="Iwama A."/>
            <person name="Ishikawa T."/>
            <person name="Jakt M."/>
            <person name="Kanapin A."/>
            <person name="Katoh M."/>
            <person name="Kawasawa Y."/>
            <person name="Kelso J."/>
            <person name="Kitamura H."/>
            <person name="Kitano H."/>
            <person name="Kollias G."/>
            <person name="Krishnan S.P."/>
            <person name="Kruger A."/>
            <person name="Kummerfeld S.K."/>
            <person name="Kurochkin I.V."/>
            <person name="Lareau L.F."/>
            <person name="Lazarevic D."/>
            <person name="Lipovich L."/>
            <person name="Liu J."/>
            <person name="Liuni S."/>
            <person name="McWilliam S."/>
            <person name="Madan Babu M."/>
            <person name="Madera M."/>
            <person name="Marchionni L."/>
            <person name="Matsuda H."/>
            <person name="Matsuzawa S."/>
            <person name="Miki H."/>
            <person name="Mignone F."/>
            <person name="Miyake S."/>
            <person name="Morris K."/>
            <person name="Mottagui-Tabar S."/>
            <person name="Mulder N."/>
            <person name="Nakano N."/>
            <person name="Nakauchi H."/>
            <person name="Ng P."/>
            <person name="Nilsson R."/>
            <person name="Nishiguchi S."/>
            <person name="Nishikawa S."/>
            <person name="Nori F."/>
            <person name="Ohara O."/>
            <person name="Okazaki Y."/>
            <person name="Orlando V."/>
            <person name="Pang K.C."/>
            <person name="Pavan W.J."/>
            <person name="Pavesi G."/>
            <person name="Pesole G."/>
            <person name="Petrovsky N."/>
            <person name="Piazza S."/>
            <person name="Reed J."/>
            <person name="Reid J.F."/>
            <person name="Ring B.Z."/>
            <person name="Ringwald M."/>
            <person name="Rost B."/>
            <person name="Ruan Y."/>
            <person name="Salzberg S.L."/>
            <person name="Sandelin A."/>
            <person name="Schneider C."/>
            <person name="Schoenbach C."/>
            <person name="Sekiguchi K."/>
            <person name="Semple C.A."/>
            <person name="Seno S."/>
            <person name="Sessa L."/>
            <person name="Sheng Y."/>
            <person name="Shibata Y."/>
            <person name="Shimada H."/>
            <person name="Shimada K."/>
            <person name="Silva D."/>
            <person name="Sinclair B."/>
            <person name="Sperling S."/>
            <person name="Stupka E."/>
            <person name="Sugiura K."/>
            <person name="Sultana R."/>
            <person name="Takenaka Y."/>
            <person name="Taki K."/>
            <person name="Tammoja K."/>
            <person name="Tan S.L."/>
            <person name="Tang S."/>
            <person name="Taylor M.S."/>
            <person name="Tegner J."/>
            <person name="Teichmann S.A."/>
            <person name="Ueda H.R."/>
            <person name="van Nimwegen E."/>
            <person name="Verardo R."/>
            <person name="Wei C.L."/>
            <person name="Yagi K."/>
            <person name="Yamanishi H."/>
            <person name="Zabarovsky E."/>
            <person name="Zhu S."/>
            <person name="Zimmer A."/>
            <person name="Hide W."/>
            <person name="Bult C."/>
            <person name="Grimmond S.M."/>
            <person name="Teasdale R.D."/>
            <person name="Liu E.T."/>
            <person name="Brusic V."/>
            <person name="Quackenbush J."/>
            <person name="Wahlestedt C."/>
            <person name="Mattick J.S."/>
            <person name="Hume D.A."/>
            <person name="Kai C."/>
            <person name="Sasaki D."/>
            <person name="Tomaru Y."/>
            <person name="Fukuda S."/>
            <person name="Kanamori-Katayama M."/>
            <person name="Suzuki M."/>
            <person name="Aoki J."/>
            <person name="Arakawa T."/>
            <person name="Iida J."/>
            <person name="Imamura K."/>
            <person name="Itoh M."/>
            <person name="Kato T."/>
            <person name="Kawaji H."/>
            <person name="Kawagashira N."/>
            <person name="Kawashima T."/>
            <person name="Kojima M."/>
            <person name="Kondo S."/>
            <person name="Konno H."/>
            <person name="Nakano K."/>
            <person name="Ninomiya N."/>
            <person name="Nishio T."/>
            <person name="Okada M."/>
            <person name="Plessy C."/>
            <person name="Shibata K."/>
            <person name="Shiraki T."/>
            <person name="Suzuki S."/>
            <person name="Tagami M."/>
            <person name="Waki K."/>
            <person name="Watahiki A."/>
            <person name="Okamura-Oho Y."/>
            <person name="Suzuki H."/>
            <person name="Kawai J."/>
            <person name="Hayashizaki Y."/>
        </authorList>
    </citation>
    <scope>NUCLEOTIDE SEQUENCE [LARGE SCALE MRNA]</scope>
    <source>
        <strain>C57BL/6J</strain>
        <strain>DBA/2J</strain>
        <strain>NOD</strain>
        <tissue>Amnion</tissue>
        <tissue>Bone marrow</tissue>
        <tissue>Colon</tissue>
        <tissue>Hippocampus</tissue>
        <tissue>Kidney</tissue>
        <tissue>Liver</tissue>
        <tissue>Lung</tissue>
        <tissue>Mammary gland</tissue>
        <tissue>Ovary</tissue>
        <tissue>Placenta</tissue>
        <tissue>Stomach</tissue>
        <tissue>Testis</tissue>
        <tissue>Thymus</tissue>
        <tissue>Tongue</tissue>
    </source>
</reference>
<reference key="4">
    <citation type="journal article" date="2004" name="Genome Res.">
        <title>The status, quality, and expansion of the NIH full-length cDNA project: the Mammalian Gene Collection (MGC).</title>
        <authorList>
            <consortium name="The MGC Project Team"/>
        </authorList>
    </citation>
    <scope>NUCLEOTIDE SEQUENCE [LARGE SCALE MRNA]</scope>
    <source>
        <strain>129</strain>
        <strain>C57BL/6J</strain>
        <strain>Czech II</strain>
        <tissue>Brain</tissue>
        <tissue>Mammary tumor</tissue>
        <tissue>Placenta</tissue>
        <tissue>Spinal ganglion</tissue>
    </source>
</reference>
<reference key="5">
    <citation type="journal article" date="1994" name="Gene">
        <title>Three different calmodulin-encoding cDNAs isolated by a modified 5'-RACE using degenerate oligodeoxyribonucleotides.</title>
        <authorList>
            <person name="Skinner T.L."/>
            <person name="Kerns R.T."/>
            <person name="Bender P.K."/>
        </authorList>
    </citation>
    <scope>NUCLEOTIDE SEQUENCE [MRNA] OF 1-131</scope>
</reference>
<reference key="6">
    <citation type="submission" date="2005-07" db="UniProtKB">
        <authorList>
            <person name="Bienvenut W.V."/>
        </authorList>
    </citation>
    <scope>PROTEIN SEQUENCE OF 2-14</scope>
    <scope>CLEAVAGE OF INITIATOR METHIONINE</scope>
    <scope>ACETYLATION AT ALA-2</scope>
    <scope>IDENTIFICATION BY MASS SPECTROMETRY</scope>
    <source>
        <strain>C57BL/6J</strain>
        <tissue>Liver</tissue>
    </source>
</reference>
<reference key="7">
    <citation type="submission" date="2007-04" db="UniProtKB">
        <authorList>
            <person name="Lubec G."/>
            <person name="Klug S."/>
            <person name="Kang S.U."/>
        </authorList>
    </citation>
    <scope>PROTEIN SEQUENCE OF 15-31; 79-87 AND 92-107</scope>
    <scope>IDENTIFICATION BY MASS SPECTROMETRY</scope>
    <source>
        <strain>C57BL/6J</strain>
        <tissue>Brain</tissue>
        <tissue>Hippocampus</tissue>
    </source>
</reference>
<reference key="8">
    <citation type="journal article" date="2008" name="J. Biol. Chem.">
        <title>S100A1 and calmodulin compete for the same binding site on ryanodine receptor.</title>
        <authorList>
            <person name="Wright N.T."/>
            <person name="Prosser B.L."/>
            <person name="Varney K.M."/>
            <person name="Zimmer D.B."/>
            <person name="Schneider M.F."/>
            <person name="Weber D.J."/>
        </authorList>
    </citation>
    <scope>INTERACTION WITH RYR1 AND RYR2</scope>
</reference>
<reference key="9">
    <citation type="journal article" date="2008" name="J. Proteome Res.">
        <title>Large-scale identification and evolution indexing of tyrosine phosphorylation sites from murine brain.</title>
        <authorList>
            <person name="Ballif B.A."/>
            <person name="Carey G.R."/>
            <person name="Sunyaev S.R."/>
            <person name="Gygi S.P."/>
        </authorList>
    </citation>
    <scope>PHOSPHORYLATION [LARGE SCALE ANALYSIS] AT TYR-100</scope>
    <scope>IDENTIFICATION BY MASS SPECTROMETRY [LARGE SCALE ANALYSIS]</scope>
    <source>
        <tissue>Brain</tissue>
    </source>
</reference>
<reference key="10">
    <citation type="journal article" date="2010" name="Cell">
        <title>A tissue-specific atlas of mouse protein phosphorylation and expression.</title>
        <authorList>
            <person name="Huttlin E.L."/>
            <person name="Jedrychowski M.P."/>
            <person name="Elias J.E."/>
            <person name="Goswami T."/>
            <person name="Rad R."/>
            <person name="Beausoleil S.A."/>
            <person name="Villen J."/>
            <person name="Haas W."/>
            <person name="Sowa M.E."/>
            <person name="Gygi S.P."/>
        </authorList>
    </citation>
    <scope>PHOSPHORYLATION [LARGE SCALE ANALYSIS] AT TYR-100 AND SER-102</scope>
    <scope>IDENTIFICATION BY MASS SPECTROMETRY [LARGE SCALE ANALYSIS]</scope>
    <source>
        <tissue>Brain</tissue>
        <tissue>Brown adipose tissue</tissue>
        <tissue>Heart</tissue>
        <tissue>Kidney</tissue>
        <tissue>Liver</tissue>
        <tissue>Lung</tissue>
        <tissue>Pancreas</tissue>
        <tissue>Spleen</tissue>
        <tissue>Testis</tissue>
    </source>
</reference>
<reference key="11">
    <citation type="journal article" date="2013" name="Mol. Cell">
        <title>SIRT5-mediated lysine desuccinylation impacts diverse metabolic pathways.</title>
        <authorList>
            <person name="Park J."/>
            <person name="Chen Y."/>
            <person name="Tishkoff D.X."/>
            <person name="Peng C."/>
            <person name="Tan M."/>
            <person name="Dai L."/>
            <person name="Xie Z."/>
            <person name="Zhang Y."/>
            <person name="Zwaans B.M."/>
            <person name="Skinner M.E."/>
            <person name="Lombard D.B."/>
            <person name="Zhao Y."/>
        </authorList>
    </citation>
    <scope>ACETYLATION [LARGE SCALE ANALYSIS] AT LYS-22</scope>
    <scope>IDENTIFICATION BY MASS SPECTROMETRY [LARGE SCALE ANALYSIS]</scope>
    <source>
        <tissue>Embryonic fibroblast</tissue>
    </source>
</reference>
<reference key="12">
    <citation type="journal article" date="2015" name="Andrology">
        <title>A novel acrosomal protein, IQCF1, involved in sperm capacitation and the acrosome reaction.</title>
        <authorList>
            <person name="Fang P."/>
            <person name="Xu W."/>
            <person name="Li D."/>
            <person name="Zhao X."/>
            <person name="Dai J."/>
            <person name="Wang Z."/>
            <person name="Yan X."/>
            <person name="Qin M."/>
            <person name="Zhang Y."/>
            <person name="Xu C."/>
            <person name="Wang L."/>
            <person name="Qiao Z."/>
        </authorList>
    </citation>
    <scope>INTERACTION WITH IQCF1</scope>
</reference>
<reference key="13">
    <citation type="journal article" date="2014" name="Elife">
        <title>Synaptotagmin 7 functions as a Ca2+-sensor for synaptic vesicle replenishment.</title>
        <authorList>
            <person name="Liu H."/>
            <person name="Bai H."/>
            <person name="Hui E."/>
            <person name="Yang L."/>
            <person name="Evans C.S."/>
            <person name="Wang Z."/>
            <person name="Kwon S.E."/>
            <person name="Chapman E.R."/>
        </authorList>
    </citation>
    <scope>INTERACTION WITH SYT7</scope>
</reference>
<organism>
    <name type="scientific">Mus musculus</name>
    <name type="common">Mouse</name>
    <dbReference type="NCBI Taxonomy" id="10090"/>
    <lineage>
        <taxon>Eukaryota</taxon>
        <taxon>Metazoa</taxon>
        <taxon>Chordata</taxon>
        <taxon>Craniata</taxon>
        <taxon>Vertebrata</taxon>
        <taxon>Euteleostomi</taxon>
        <taxon>Mammalia</taxon>
        <taxon>Eutheria</taxon>
        <taxon>Euarchontoglires</taxon>
        <taxon>Glires</taxon>
        <taxon>Rodentia</taxon>
        <taxon>Myomorpha</taxon>
        <taxon>Muroidea</taxon>
        <taxon>Muridae</taxon>
        <taxon>Murinae</taxon>
        <taxon>Mus</taxon>
        <taxon>Mus</taxon>
    </lineage>
</organism>
<name>CALM2_MOUSE</name>
<feature type="initiator methionine" description="Removed" evidence="11">
    <location>
        <position position="1"/>
    </location>
</feature>
<feature type="chain" id="PRO_0000439936" description="Calmodulin-2">
    <location>
        <begin position="2"/>
        <end position="149"/>
    </location>
</feature>
<feature type="domain" description="EF-hand 1" evidence="7">
    <location>
        <begin position="8"/>
        <end position="43"/>
    </location>
</feature>
<feature type="domain" description="EF-hand 2" evidence="7">
    <location>
        <begin position="44"/>
        <end position="79"/>
    </location>
</feature>
<feature type="domain" description="EF-hand 3" evidence="7">
    <location>
        <begin position="81"/>
        <end position="116"/>
    </location>
</feature>
<feature type="domain" description="EF-hand 4" evidence="7">
    <location>
        <begin position="117"/>
        <end position="149"/>
    </location>
</feature>
<feature type="region of interest" description="Necessary and sufficient for interaction with PCP4" evidence="2">
    <location>
        <begin position="77"/>
        <end position="149"/>
    </location>
</feature>
<feature type="binding site" evidence="7">
    <location>
        <position position="21"/>
    </location>
    <ligand>
        <name>Ca(2+)</name>
        <dbReference type="ChEBI" id="CHEBI:29108"/>
        <label>1</label>
    </ligand>
</feature>
<feature type="binding site" evidence="7">
    <location>
        <position position="23"/>
    </location>
    <ligand>
        <name>Ca(2+)</name>
        <dbReference type="ChEBI" id="CHEBI:29108"/>
        <label>1</label>
    </ligand>
</feature>
<feature type="binding site" evidence="7">
    <location>
        <position position="25"/>
    </location>
    <ligand>
        <name>Ca(2+)</name>
        <dbReference type="ChEBI" id="CHEBI:29108"/>
        <label>1</label>
    </ligand>
</feature>
<feature type="binding site" evidence="7">
    <location>
        <position position="27"/>
    </location>
    <ligand>
        <name>Ca(2+)</name>
        <dbReference type="ChEBI" id="CHEBI:29108"/>
        <label>1</label>
    </ligand>
</feature>
<feature type="binding site" evidence="7">
    <location>
        <position position="32"/>
    </location>
    <ligand>
        <name>Ca(2+)</name>
        <dbReference type="ChEBI" id="CHEBI:29108"/>
        <label>1</label>
    </ligand>
</feature>
<feature type="binding site" evidence="7">
    <location>
        <position position="57"/>
    </location>
    <ligand>
        <name>Ca(2+)</name>
        <dbReference type="ChEBI" id="CHEBI:29108"/>
        <label>2</label>
    </ligand>
</feature>
<feature type="binding site" evidence="7">
    <location>
        <position position="59"/>
    </location>
    <ligand>
        <name>Ca(2+)</name>
        <dbReference type="ChEBI" id="CHEBI:29108"/>
        <label>2</label>
    </ligand>
</feature>
<feature type="binding site" evidence="7">
    <location>
        <position position="61"/>
    </location>
    <ligand>
        <name>Ca(2+)</name>
        <dbReference type="ChEBI" id="CHEBI:29108"/>
        <label>2</label>
    </ligand>
</feature>
<feature type="binding site" evidence="7">
    <location>
        <position position="63"/>
    </location>
    <ligand>
        <name>Ca(2+)</name>
        <dbReference type="ChEBI" id="CHEBI:29108"/>
        <label>2</label>
    </ligand>
</feature>
<feature type="binding site" evidence="7">
    <location>
        <position position="68"/>
    </location>
    <ligand>
        <name>Ca(2+)</name>
        <dbReference type="ChEBI" id="CHEBI:29108"/>
        <label>2</label>
    </ligand>
</feature>
<feature type="binding site" evidence="7">
    <location>
        <position position="94"/>
    </location>
    <ligand>
        <name>Ca(2+)</name>
        <dbReference type="ChEBI" id="CHEBI:29108"/>
        <label>3</label>
    </ligand>
</feature>
<feature type="binding site" evidence="7">
    <location>
        <position position="96"/>
    </location>
    <ligand>
        <name>Ca(2+)</name>
        <dbReference type="ChEBI" id="CHEBI:29108"/>
        <label>3</label>
    </ligand>
</feature>
<feature type="binding site" evidence="7">
    <location>
        <position position="98"/>
    </location>
    <ligand>
        <name>Ca(2+)</name>
        <dbReference type="ChEBI" id="CHEBI:29108"/>
        <label>3</label>
    </ligand>
</feature>
<feature type="binding site" evidence="7">
    <location>
        <position position="100"/>
    </location>
    <ligand>
        <name>Ca(2+)</name>
        <dbReference type="ChEBI" id="CHEBI:29108"/>
        <label>3</label>
    </ligand>
</feature>
<feature type="binding site" evidence="7">
    <location>
        <position position="105"/>
    </location>
    <ligand>
        <name>Ca(2+)</name>
        <dbReference type="ChEBI" id="CHEBI:29108"/>
        <label>3</label>
    </ligand>
</feature>
<feature type="binding site" evidence="7">
    <location>
        <position position="130"/>
    </location>
    <ligand>
        <name>Ca(2+)</name>
        <dbReference type="ChEBI" id="CHEBI:29108"/>
        <label>4</label>
    </ligand>
</feature>
<feature type="binding site" evidence="7">
    <location>
        <position position="132"/>
    </location>
    <ligand>
        <name>Ca(2+)</name>
        <dbReference type="ChEBI" id="CHEBI:29108"/>
        <label>4</label>
    </ligand>
</feature>
<feature type="binding site" evidence="7">
    <location>
        <position position="134"/>
    </location>
    <ligand>
        <name>Ca(2+)</name>
        <dbReference type="ChEBI" id="CHEBI:29108"/>
        <label>4</label>
    </ligand>
</feature>
<feature type="binding site" evidence="7">
    <location>
        <position position="136"/>
    </location>
    <ligand>
        <name>Ca(2+)</name>
        <dbReference type="ChEBI" id="CHEBI:29108"/>
        <label>4</label>
    </ligand>
</feature>
<feature type="binding site" evidence="7">
    <location>
        <position position="141"/>
    </location>
    <ligand>
        <name>Ca(2+)</name>
        <dbReference type="ChEBI" id="CHEBI:29108"/>
        <label>4</label>
    </ligand>
</feature>
<feature type="modified residue" description="N-acetylalanine" evidence="11">
    <location>
        <position position="2"/>
    </location>
</feature>
<feature type="modified residue" description="N6-acetyllysine; alternate" evidence="16">
    <location>
        <position position="22"/>
    </location>
</feature>
<feature type="modified residue" description="Phosphothreonine; by CaMK4" evidence="4">
    <location>
        <position position="45"/>
    </location>
</feature>
<feature type="modified residue" description="Phosphoserine" evidence="2">
    <location>
        <position position="82"/>
    </location>
</feature>
<feature type="modified residue" description="N6-acetyllysine" evidence="2">
    <location>
        <position position="95"/>
    </location>
</feature>
<feature type="modified residue" description="Phosphotyrosine" evidence="14 15">
    <location>
        <position position="100"/>
    </location>
</feature>
<feature type="modified residue" description="Phosphoserine" evidence="15">
    <location>
        <position position="102"/>
    </location>
</feature>
<feature type="modified residue" description="Phosphothreonine" evidence="2">
    <location>
        <position position="111"/>
    </location>
</feature>
<feature type="modified residue" description="N6,N6,N6-trimethyllysine; alternate" evidence="2">
    <location>
        <position position="116"/>
    </location>
</feature>
<feature type="modified residue" description="N6-methyllysine; alternate" evidence="2">
    <location>
        <position position="116"/>
    </location>
</feature>
<feature type="modified residue" description="Phosphotyrosine" evidence="2">
    <location>
        <position position="139"/>
    </location>
</feature>
<feature type="cross-link" description="Glycyl lysine isopeptide (Lys-Gly) (interchain with G-Cter in SUMO2); alternate" evidence="2">
    <location>
        <position position="22"/>
    </location>
</feature>
<feature type="cross-link" description="Glycyl lysine isopeptide (Lys-Gly) (interchain with G-Cter in ubiquitin); alternate" evidence="5">
    <location>
        <position position="22"/>
    </location>
</feature>